<dbReference type="EMBL" id="AY265460">
    <property type="protein sequence ID" value="AAP91870.1"/>
    <property type="molecule type" value="mRNA"/>
</dbReference>
<dbReference type="EMBL" id="AF394226">
    <property type="protein sequence ID" value="AAL46636.1"/>
    <property type="molecule type" value="mRNA"/>
</dbReference>
<dbReference type="EMBL" id="AL136637">
    <property type="protein sequence ID" value="CAB66572.1"/>
    <property type="molecule type" value="mRNA"/>
</dbReference>
<dbReference type="EMBL" id="AK054593">
    <property type="protein sequence ID" value="BAB70770.1"/>
    <property type="molecule type" value="mRNA"/>
</dbReference>
<dbReference type="EMBL" id="AK290718">
    <property type="protein sequence ID" value="BAF83407.1"/>
    <property type="molecule type" value="mRNA"/>
</dbReference>
<dbReference type="EMBL" id="AL021978">
    <property type="status" value="NOT_ANNOTATED_CDS"/>
    <property type="molecule type" value="Genomic_DNA"/>
</dbReference>
<dbReference type="EMBL" id="AL022343">
    <property type="status" value="NOT_ANNOTATED_CDS"/>
    <property type="molecule type" value="Genomic_DNA"/>
</dbReference>
<dbReference type="EMBL" id="BC011912">
    <property type="protein sequence ID" value="AAH11912.1"/>
    <property type="molecule type" value="mRNA"/>
</dbReference>
<dbReference type="EMBL" id="AF061734">
    <property type="protein sequence ID" value="AAG43145.1"/>
    <property type="status" value="ALT_INIT"/>
    <property type="molecule type" value="mRNA"/>
</dbReference>
<dbReference type="CCDS" id="CCDS4534.1">
    <molecule id="Q96EV8-1"/>
</dbReference>
<dbReference type="CCDS" id="CCDS4535.1">
    <molecule id="Q96EV8-2"/>
</dbReference>
<dbReference type="RefSeq" id="NP_001258596.1">
    <molecule id="Q96EV8-3"/>
    <property type="nucleotide sequence ID" value="NM_001271667.2"/>
</dbReference>
<dbReference type="RefSeq" id="NP_001258597.1">
    <property type="nucleotide sequence ID" value="NM_001271668.1"/>
</dbReference>
<dbReference type="RefSeq" id="NP_001258598.1">
    <property type="nucleotide sequence ID" value="NM_001271669.1"/>
</dbReference>
<dbReference type="RefSeq" id="NP_115498.2">
    <molecule id="Q96EV8-1"/>
    <property type="nucleotide sequence ID" value="NM_032122.4"/>
</dbReference>
<dbReference type="RefSeq" id="NP_898861.1">
    <molecule id="Q96EV8-2"/>
    <property type="nucleotide sequence ID" value="NM_183040.2"/>
</dbReference>
<dbReference type="SMR" id="Q96EV8"/>
<dbReference type="BioGRID" id="123857">
    <property type="interactions" value="165"/>
</dbReference>
<dbReference type="ComplexPortal" id="CPX-1910">
    <property type="entry name" value="BLOC-1 complex"/>
</dbReference>
<dbReference type="CORUM" id="Q96EV8"/>
<dbReference type="FunCoup" id="Q96EV8">
    <property type="interactions" value="251"/>
</dbReference>
<dbReference type="IntAct" id="Q96EV8">
    <property type="interactions" value="141"/>
</dbReference>
<dbReference type="MINT" id="Q96EV8"/>
<dbReference type="STRING" id="9606.ENSP00000341680"/>
<dbReference type="GlyGen" id="Q96EV8">
    <property type="glycosylation" value="2 sites, 1 O-linked glycan (2 sites)"/>
</dbReference>
<dbReference type="iPTMnet" id="Q96EV8"/>
<dbReference type="PhosphoSitePlus" id="Q96EV8"/>
<dbReference type="BioMuta" id="DTNBP1"/>
<dbReference type="DMDM" id="38604971"/>
<dbReference type="jPOST" id="Q96EV8"/>
<dbReference type="MassIVE" id="Q96EV8"/>
<dbReference type="PaxDb" id="9606-ENSP00000341680"/>
<dbReference type="PeptideAtlas" id="Q96EV8"/>
<dbReference type="ProteomicsDB" id="76455">
    <molecule id="Q96EV8-1"/>
</dbReference>
<dbReference type="ProteomicsDB" id="76456">
    <molecule id="Q96EV8-2"/>
</dbReference>
<dbReference type="Pumba" id="Q96EV8"/>
<dbReference type="Antibodypedia" id="25035">
    <property type="antibodies" value="439 antibodies from 35 providers"/>
</dbReference>
<dbReference type="DNASU" id="84062"/>
<dbReference type="Ensembl" id="ENST00000338950.9">
    <molecule id="Q96EV8-2"/>
    <property type="protein sequence ID" value="ENSP00000344718.5"/>
    <property type="gene ID" value="ENSG00000047579.20"/>
</dbReference>
<dbReference type="Ensembl" id="ENST00000344537.10">
    <molecule id="Q96EV8-1"/>
    <property type="protein sequence ID" value="ENSP00000341680.6"/>
    <property type="gene ID" value="ENSG00000047579.20"/>
</dbReference>
<dbReference type="GeneID" id="84062"/>
<dbReference type="KEGG" id="hsa:84062"/>
<dbReference type="MANE-Select" id="ENST00000344537.10">
    <property type="protein sequence ID" value="ENSP00000341680.6"/>
    <property type="RefSeq nucleotide sequence ID" value="NM_032122.5"/>
    <property type="RefSeq protein sequence ID" value="NP_115498.2"/>
</dbReference>
<dbReference type="UCSC" id="uc003nbm.4">
    <molecule id="Q96EV8-1"/>
    <property type="organism name" value="human"/>
</dbReference>
<dbReference type="AGR" id="HGNC:17328"/>
<dbReference type="CTD" id="84062"/>
<dbReference type="DisGeNET" id="84062"/>
<dbReference type="GeneCards" id="DTNBP1"/>
<dbReference type="GeneReviews" id="DTNBP1"/>
<dbReference type="HGNC" id="HGNC:17328">
    <property type="gene designation" value="DTNBP1"/>
</dbReference>
<dbReference type="HPA" id="ENSG00000047579">
    <property type="expression patterns" value="Tissue enhanced (brain, retina)"/>
</dbReference>
<dbReference type="MalaCards" id="DTNBP1"/>
<dbReference type="MIM" id="607145">
    <property type="type" value="gene"/>
</dbReference>
<dbReference type="MIM" id="614076">
    <property type="type" value="phenotype"/>
</dbReference>
<dbReference type="neXtProt" id="NX_Q96EV8"/>
<dbReference type="OpenTargets" id="ENSG00000047579"/>
<dbReference type="Orphanet" id="231531">
    <property type="disease" value="Hermansky-Pudlak syndrome due to BLOC-1 deficiency"/>
</dbReference>
<dbReference type="PharmGKB" id="PA27512"/>
<dbReference type="VEuPathDB" id="HostDB:ENSG00000047579"/>
<dbReference type="eggNOG" id="ENOG502QRS9">
    <property type="taxonomic scope" value="Eukaryota"/>
</dbReference>
<dbReference type="GeneTree" id="ENSGT00940000156479"/>
<dbReference type="InParanoid" id="Q96EV8"/>
<dbReference type="OMA" id="KSWFLLH"/>
<dbReference type="OrthoDB" id="2445127at2759"/>
<dbReference type="PAN-GO" id="Q96EV8">
    <property type="GO annotations" value="9 GO annotations based on evolutionary models"/>
</dbReference>
<dbReference type="PhylomeDB" id="Q96EV8"/>
<dbReference type="TreeFam" id="TF332997"/>
<dbReference type="PathwayCommons" id="Q96EV8"/>
<dbReference type="Reactome" id="R-HSA-432722">
    <property type="pathway name" value="Golgi Associated Vesicle Biogenesis"/>
</dbReference>
<dbReference type="SignaLink" id="Q96EV8"/>
<dbReference type="SIGNOR" id="Q96EV8"/>
<dbReference type="BioGRID-ORCS" id="84062">
    <property type="hits" value="11 hits in 1155 CRISPR screens"/>
</dbReference>
<dbReference type="CD-CODE" id="FB4E32DD">
    <property type="entry name" value="Presynaptic clusters and postsynaptic densities"/>
</dbReference>
<dbReference type="ChiTaRS" id="DTNBP1">
    <property type="organism name" value="human"/>
</dbReference>
<dbReference type="GeneWiki" id="Dysbindin"/>
<dbReference type="GenomeRNAi" id="84062"/>
<dbReference type="Pharos" id="Q96EV8">
    <property type="development level" value="Tbio"/>
</dbReference>
<dbReference type="PRO" id="PR:Q96EV8"/>
<dbReference type="Proteomes" id="UP000005640">
    <property type="component" value="Chromosome 6"/>
</dbReference>
<dbReference type="RNAct" id="Q96EV8">
    <property type="molecule type" value="protein"/>
</dbReference>
<dbReference type="Bgee" id="ENSG00000047579">
    <property type="expression patterns" value="Expressed in tendon of biceps brachii and 180 other cell types or tissues"/>
</dbReference>
<dbReference type="ExpressionAtlas" id="Q96EV8">
    <property type="expression patterns" value="baseline and differential"/>
</dbReference>
<dbReference type="GO" id="GO:0030424">
    <property type="term" value="C:axon"/>
    <property type="evidence" value="ECO:0000250"/>
    <property type="project" value="UniProtKB"/>
</dbReference>
<dbReference type="GO" id="GO:1904115">
    <property type="term" value="C:axon cytoplasm"/>
    <property type="evidence" value="ECO:0007669"/>
    <property type="project" value="GOC"/>
</dbReference>
<dbReference type="GO" id="GO:0031083">
    <property type="term" value="C:BLOC-1 complex"/>
    <property type="evidence" value="ECO:0000314"/>
    <property type="project" value="UniProtKB"/>
</dbReference>
<dbReference type="GO" id="GO:0005737">
    <property type="term" value="C:cytoplasm"/>
    <property type="evidence" value="ECO:0000250"/>
    <property type="project" value="UniProtKB"/>
</dbReference>
<dbReference type="GO" id="GO:0005829">
    <property type="term" value="C:cytosol"/>
    <property type="evidence" value="ECO:0000304"/>
    <property type="project" value="Reactome"/>
</dbReference>
<dbReference type="GO" id="GO:0043197">
    <property type="term" value="C:dendritic spine"/>
    <property type="evidence" value="ECO:0000250"/>
    <property type="project" value="UniProtKB"/>
</dbReference>
<dbReference type="GO" id="GO:0005789">
    <property type="term" value="C:endoplasmic reticulum membrane"/>
    <property type="evidence" value="ECO:0000250"/>
    <property type="project" value="UniProtKB"/>
</dbReference>
<dbReference type="GO" id="GO:0010008">
    <property type="term" value="C:endosome membrane"/>
    <property type="evidence" value="ECO:0007669"/>
    <property type="project" value="UniProtKB-SubCell"/>
</dbReference>
<dbReference type="GO" id="GO:0098978">
    <property type="term" value="C:glutamatergic synapse"/>
    <property type="evidence" value="ECO:0007669"/>
    <property type="project" value="Ensembl"/>
</dbReference>
<dbReference type="GO" id="GO:0030426">
    <property type="term" value="C:growth cone"/>
    <property type="evidence" value="ECO:0000250"/>
    <property type="project" value="UniProtKB"/>
</dbReference>
<dbReference type="GO" id="GO:0098686">
    <property type="term" value="C:hippocampal mossy fiber to CA3 synapse"/>
    <property type="evidence" value="ECO:0007669"/>
    <property type="project" value="Ensembl"/>
</dbReference>
<dbReference type="GO" id="GO:0033162">
    <property type="term" value="C:melanosome membrane"/>
    <property type="evidence" value="ECO:0007669"/>
    <property type="project" value="UniProtKB-SubCell"/>
</dbReference>
<dbReference type="GO" id="GO:0015630">
    <property type="term" value="C:microtubule cytoskeleton"/>
    <property type="evidence" value="ECO:0000314"/>
    <property type="project" value="HPA"/>
</dbReference>
<dbReference type="GO" id="GO:0030496">
    <property type="term" value="C:midbody"/>
    <property type="evidence" value="ECO:0000314"/>
    <property type="project" value="HPA"/>
</dbReference>
<dbReference type="GO" id="GO:0043005">
    <property type="term" value="C:neuron projection"/>
    <property type="evidence" value="ECO:0000314"/>
    <property type="project" value="UniProtKB"/>
</dbReference>
<dbReference type="GO" id="GO:0043025">
    <property type="term" value="C:neuronal cell body"/>
    <property type="evidence" value="ECO:0007669"/>
    <property type="project" value="Ensembl"/>
</dbReference>
<dbReference type="GO" id="GO:0005634">
    <property type="term" value="C:nucleus"/>
    <property type="evidence" value="ECO:0000250"/>
    <property type="project" value="UniProtKB"/>
</dbReference>
<dbReference type="GO" id="GO:0005886">
    <property type="term" value="C:plasma membrane"/>
    <property type="evidence" value="ECO:0000318"/>
    <property type="project" value="GO_Central"/>
</dbReference>
<dbReference type="GO" id="GO:0014069">
    <property type="term" value="C:postsynaptic density"/>
    <property type="evidence" value="ECO:0000314"/>
    <property type="project" value="UniProtKB"/>
</dbReference>
<dbReference type="GO" id="GO:0045211">
    <property type="term" value="C:postsynaptic membrane"/>
    <property type="evidence" value="ECO:0007669"/>
    <property type="project" value="UniProtKB-SubCell"/>
</dbReference>
<dbReference type="GO" id="GO:0042383">
    <property type="term" value="C:sarcolemma"/>
    <property type="evidence" value="ECO:0000250"/>
    <property type="project" value="UniProtKB"/>
</dbReference>
<dbReference type="GO" id="GO:0016528">
    <property type="term" value="C:sarcoplasm"/>
    <property type="evidence" value="ECO:0007669"/>
    <property type="project" value="Ensembl"/>
</dbReference>
<dbReference type="GO" id="GO:0098685">
    <property type="term" value="C:Schaffer collateral - CA1 synapse"/>
    <property type="evidence" value="ECO:0007669"/>
    <property type="project" value="Ensembl"/>
</dbReference>
<dbReference type="GO" id="GO:0030672">
    <property type="term" value="C:synaptic vesicle membrane"/>
    <property type="evidence" value="ECO:0000314"/>
    <property type="project" value="UniProtKB"/>
</dbReference>
<dbReference type="GO" id="GO:0030036">
    <property type="term" value="P:actin cytoskeleton organization"/>
    <property type="evidence" value="ECO:0000250"/>
    <property type="project" value="UniProtKB"/>
</dbReference>
<dbReference type="GO" id="GO:0008089">
    <property type="term" value="P:anterograde axonal transport"/>
    <property type="evidence" value="ECO:0000250"/>
    <property type="project" value="UniProtKB"/>
</dbReference>
<dbReference type="GO" id="GO:0048490">
    <property type="term" value="P:anterograde synaptic vesicle transport"/>
    <property type="evidence" value="ECO:0000250"/>
    <property type="project" value="UniProtKB"/>
</dbReference>
<dbReference type="GO" id="GO:0007596">
    <property type="term" value="P:blood coagulation"/>
    <property type="evidence" value="ECO:0007669"/>
    <property type="project" value="Ensembl"/>
</dbReference>
<dbReference type="GO" id="GO:0060271">
    <property type="term" value="P:cilium assembly"/>
    <property type="evidence" value="ECO:0007669"/>
    <property type="project" value="Ensembl"/>
</dbReference>
<dbReference type="GO" id="GO:0048813">
    <property type="term" value="P:dendrite morphogenesis"/>
    <property type="evidence" value="ECO:0007669"/>
    <property type="project" value="Ensembl"/>
</dbReference>
<dbReference type="GO" id="GO:0001822">
    <property type="term" value="P:kidney development"/>
    <property type="evidence" value="ECO:0007669"/>
    <property type="project" value="Ensembl"/>
</dbReference>
<dbReference type="GO" id="GO:0032438">
    <property type="term" value="P:melanosome organization"/>
    <property type="evidence" value="ECO:0000303"/>
    <property type="project" value="UniProtKB"/>
</dbReference>
<dbReference type="GO" id="GO:0007613">
    <property type="term" value="P:memory"/>
    <property type="evidence" value="ECO:0007669"/>
    <property type="project" value="Ensembl"/>
</dbReference>
<dbReference type="GO" id="GO:0061002">
    <property type="term" value="P:negative regulation of dendritic spine morphogenesis"/>
    <property type="evidence" value="ECO:0007669"/>
    <property type="project" value="Ensembl"/>
</dbReference>
<dbReference type="GO" id="GO:0031175">
    <property type="term" value="P:neuron projection development"/>
    <property type="evidence" value="ECO:0000314"/>
    <property type="project" value="UniProtKB"/>
</dbReference>
<dbReference type="GO" id="GO:0048812">
    <property type="term" value="P:neuron projection morphogenesis"/>
    <property type="evidence" value="ECO:0000250"/>
    <property type="project" value="UniProtKB"/>
</dbReference>
<dbReference type="GO" id="GO:0060155">
    <property type="term" value="P:platelet dense granule organization"/>
    <property type="evidence" value="ECO:0000318"/>
    <property type="project" value="GO_Central"/>
</dbReference>
<dbReference type="GO" id="GO:0010628">
    <property type="term" value="P:positive regulation of gene expression"/>
    <property type="evidence" value="ECO:0000250"/>
    <property type="project" value="UniProtKB"/>
</dbReference>
<dbReference type="GO" id="GO:0061646">
    <property type="term" value="P:positive regulation of glutamate neurotransmitter secretion in response to membrane depolarization"/>
    <property type="evidence" value="ECO:0007669"/>
    <property type="project" value="Ensembl"/>
</dbReference>
<dbReference type="GO" id="GO:0001956">
    <property type="term" value="P:positive regulation of neurotransmitter secretion"/>
    <property type="evidence" value="ECO:0000250"/>
    <property type="project" value="UniProtKB"/>
</dbReference>
<dbReference type="GO" id="GO:0002092">
    <property type="term" value="P:positive regulation of receptor internalization"/>
    <property type="evidence" value="ECO:0007669"/>
    <property type="project" value="Ensembl"/>
</dbReference>
<dbReference type="GO" id="GO:0071806">
    <property type="term" value="P:protein transmembrane transport"/>
    <property type="evidence" value="ECO:0007669"/>
    <property type="project" value="Ensembl"/>
</dbReference>
<dbReference type="GO" id="GO:0060159">
    <property type="term" value="P:regulation of dopamine receptor signaling pathway"/>
    <property type="evidence" value="ECO:0000250"/>
    <property type="project" value="UniProtKB"/>
</dbReference>
<dbReference type="GO" id="GO:0014059">
    <property type="term" value="P:regulation of dopamine secretion"/>
    <property type="evidence" value="ECO:0000250"/>
    <property type="project" value="UniProtKB"/>
</dbReference>
<dbReference type="GO" id="GO:0009966">
    <property type="term" value="P:regulation of signal transduction"/>
    <property type="evidence" value="ECO:0000318"/>
    <property type="project" value="GO_Central"/>
</dbReference>
<dbReference type="GO" id="GO:2000300">
    <property type="term" value="P:regulation of synaptic vesicle exocytosis"/>
    <property type="evidence" value="ECO:0000318"/>
    <property type="project" value="GO_Central"/>
</dbReference>
<dbReference type="GO" id="GO:0060041">
    <property type="term" value="P:retina development in camera-type eye"/>
    <property type="evidence" value="ECO:0007669"/>
    <property type="project" value="Ensembl"/>
</dbReference>
<dbReference type="InterPro" id="IPR007531">
    <property type="entry name" value="Dysbindin"/>
</dbReference>
<dbReference type="PANTHER" id="PTHR16294:SF5">
    <property type="entry name" value="DYSBINDIN"/>
    <property type="match status" value="1"/>
</dbReference>
<dbReference type="PANTHER" id="PTHR16294">
    <property type="entry name" value="DYSTROBREVIN BINDING PROTEIN 1 DYSBINDIN"/>
    <property type="match status" value="1"/>
</dbReference>
<dbReference type="Pfam" id="PF04440">
    <property type="entry name" value="Dysbindin"/>
    <property type="match status" value="1"/>
</dbReference>
<protein>
    <recommendedName>
        <fullName>Dysbindin</fullName>
    </recommendedName>
    <alternativeName>
        <fullName>Biogenesis of lysosome-related organelles complex 1 subunit 8</fullName>
        <shortName>BLOC-1 subunit 8</shortName>
    </alternativeName>
    <alternativeName>
        <fullName>Dysbindin-1</fullName>
    </alternativeName>
    <alternativeName>
        <fullName>Dystrobrevin-binding protein 1</fullName>
    </alternativeName>
    <alternativeName>
        <fullName>Hermansky-Pudlak syndrome 7 protein</fullName>
        <shortName>HPS7 protein</shortName>
    </alternativeName>
</protein>
<reference key="1">
    <citation type="journal article" date="2003" name="Nat. Genet.">
        <title>Hermansky-Pudlak syndrome type 7 (HPS-7) results from mutant dysbindin, a member of the biogenesis of lysosome-related organelles complex 1 (BLOC-1).</title>
        <authorList>
            <person name="Li W."/>
            <person name="Zhang Q."/>
            <person name="Oiso N."/>
            <person name="Novak E.K."/>
            <person name="Gautam R."/>
            <person name="O'Brien E.P."/>
            <person name="Tinsley C.L."/>
            <person name="Blake D.J."/>
            <person name="Spritz R.A."/>
            <person name="Copeland N.G."/>
            <person name="Jenkins N.A."/>
            <person name="Amato D."/>
            <person name="Roe B.A."/>
            <person name="Starcevic M."/>
            <person name="Dell'Angelica E.C."/>
            <person name="Elliott R.W."/>
            <person name="Mishra V."/>
            <person name="Kingsmore S.F."/>
            <person name="Paylor R.E."/>
            <person name="Swank R.T."/>
        </authorList>
    </citation>
    <scope>NUCLEOTIDE SEQUENCE [MRNA] (ISOFORM 1)</scope>
    <scope>INVOLVEMENT IN HPS7</scope>
    <source>
        <tissue>Placenta</tissue>
    </source>
</reference>
<reference key="2">
    <citation type="submission" date="2001-06" db="EMBL/GenBank/DDBJ databases">
        <title>Localization and identification of a human DTNBP1 gene from a putative schizophrenia susceptibility locus on 6p22.3 by in silico cloning.</title>
        <authorList>
            <person name="Jiang Y."/>
            <person name="Straub R.E."/>
            <person name="Sullivan P.F."/>
            <person name="Chen X."/>
            <person name="O'Neill F.A."/>
            <person name="Walsh D."/>
            <person name="Kendler K.S."/>
            <person name="Riley B.P."/>
        </authorList>
    </citation>
    <scope>NUCLEOTIDE SEQUENCE [MRNA] (ISOFORM 1)</scope>
    <source>
        <tissue>Brain</tissue>
    </source>
</reference>
<reference key="3">
    <citation type="journal article" date="2001" name="Genome Res.">
        <title>Towards a catalog of human genes and proteins: sequencing and analysis of 500 novel complete protein coding human cDNAs.</title>
        <authorList>
            <person name="Wiemann S."/>
            <person name="Weil B."/>
            <person name="Wellenreuther R."/>
            <person name="Gassenhuber J."/>
            <person name="Glassl S."/>
            <person name="Ansorge W."/>
            <person name="Boecher M."/>
            <person name="Bloecker H."/>
            <person name="Bauersachs S."/>
            <person name="Blum H."/>
            <person name="Lauber J."/>
            <person name="Duesterhoeft A."/>
            <person name="Beyer A."/>
            <person name="Koehrer K."/>
            <person name="Strack N."/>
            <person name="Mewes H.-W."/>
            <person name="Ottenwaelder B."/>
            <person name="Obermaier B."/>
            <person name="Tampe J."/>
            <person name="Heubner D."/>
            <person name="Wambutt R."/>
            <person name="Korn B."/>
            <person name="Klein M."/>
            <person name="Poustka A."/>
        </authorList>
    </citation>
    <scope>NUCLEOTIDE SEQUENCE [LARGE SCALE MRNA] (ISOFORM 2)</scope>
    <source>
        <tissue>Brain</tissue>
    </source>
</reference>
<reference key="4">
    <citation type="journal article" date="2004" name="Nat. Genet.">
        <title>Complete sequencing and characterization of 21,243 full-length human cDNAs.</title>
        <authorList>
            <person name="Ota T."/>
            <person name="Suzuki Y."/>
            <person name="Nishikawa T."/>
            <person name="Otsuki T."/>
            <person name="Sugiyama T."/>
            <person name="Irie R."/>
            <person name="Wakamatsu A."/>
            <person name="Hayashi K."/>
            <person name="Sato H."/>
            <person name="Nagai K."/>
            <person name="Kimura K."/>
            <person name="Makita H."/>
            <person name="Sekine M."/>
            <person name="Obayashi M."/>
            <person name="Nishi T."/>
            <person name="Shibahara T."/>
            <person name="Tanaka T."/>
            <person name="Ishii S."/>
            <person name="Yamamoto J."/>
            <person name="Saito K."/>
            <person name="Kawai Y."/>
            <person name="Isono Y."/>
            <person name="Nakamura Y."/>
            <person name="Nagahari K."/>
            <person name="Murakami K."/>
            <person name="Yasuda T."/>
            <person name="Iwayanagi T."/>
            <person name="Wagatsuma M."/>
            <person name="Shiratori A."/>
            <person name="Sudo H."/>
            <person name="Hosoiri T."/>
            <person name="Kaku Y."/>
            <person name="Kodaira H."/>
            <person name="Kondo H."/>
            <person name="Sugawara M."/>
            <person name="Takahashi M."/>
            <person name="Kanda K."/>
            <person name="Yokoi T."/>
            <person name="Furuya T."/>
            <person name="Kikkawa E."/>
            <person name="Omura Y."/>
            <person name="Abe K."/>
            <person name="Kamihara K."/>
            <person name="Katsuta N."/>
            <person name="Sato K."/>
            <person name="Tanikawa M."/>
            <person name="Yamazaki M."/>
            <person name="Ninomiya K."/>
            <person name="Ishibashi T."/>
            <person name="Yamashita H."/>
            <person name="Murakawa K."/>
            <person name="Fujimori K."/>
            <person name="Tanai H."/>
            <person name="Kimata M."/>
            <person name="Watanabe M."/>
            <person name="Hiraoka S."/>
            <person name="Chiba Y."/>
            <person name="Ishida S."/>
            <person name="Ono Y."/>
            <person name="Takiguchi S."/>
            <person name="Watanabe S."/>
            <person name="Yosida M."/>
            <person name="Hotuta T."/>
            <person name="Kusano J."/>
            <person name="Kanehori K."/>
            <person name="Takahashi-Fujii A."/>
            <person name="Hara H."/>
            <person name="Tanase T.-O."/>
            <person name="Nomura Y."/>
            <person name="Togiya S."/>
            <person name="Komai F."/>
            <person name="Hara R."/>
            <person name="Takeuchi K."/>
            <person name="Arita M."/>
            <person name="Imose N."/>
            <person name="Musashino K."/>
            <person name="Yuuki H."/>
            <person name="Oshima A."/>
            <person name="Sasaki N."/>
            <person name="Aotsuka S."/>
            <person name="Yoshikawa Y."/>
            <person name="Matsunawa H."/>
            <person name="Ichihara T."/>
            <person name="Shiohata N."/>
            <person name="Sano S."/>
            <person name="Moriya S."/>
            <person name="Momiyama H."/>
            <person name="Satoh N."/>
            <person name="Takami S."/>
            <person name="Terashima Y."/>
            <person name="Suzuki O."/>
            <person name="Nakagawa S."/>
            <person name="Senoh A."/>
            <person name="Mizoguchi H."/>
            <person name="Goto Y."/>
            <person name="Shimizu F."/>
            <person name="Wakebe H."/>
            <person name="Hishigaki H."/>
            <person name="Watanabe T."/>
            <person name="Sugiyama A."/>
            <person name="Takemoto M."/>
            <person name="Kawakami B."/>
            <person name="Yamazaki M."/>
            <person name="Watanabe K."/>
            <person name="Kumagai A."/>
            <person name="Itakura S."/>
            <person name="Fukuzumi Y."/>
            <person name="Fujimori Y."/>
            <person name="Komiyama M."/>
            <person name="Tashiro H."/>
            <person name="Tanigami A."/>
            <person name="Fujiwara T."/>
            <person name="Ono T."/>
            <person name="Yamada K."/>
            <person name="Fujii Y."/>
            <person name="Ozaki K."/>
            <person name="Hirao M."/>
            <person name="Ohmori Y."/>
            <person name="Kawabata A."/>
            <person name="Hikiji T."/>
            <person name="Kobatake N."/>
            <person name="Inagaki H."/>
            <person name="Ikema Y."/>
            <person name="Okamoto S."/>
            <person name="Okitani R."/>
            <person name="Kawakami T."/>
            <person name="Noguchi S."/>
            <person name="Itoh T."/>
            <person name="Shigeta K."/>
            <person name="Senba T."/>
            <person name="Matsumura K."/>
            <person name="Nakajima Y."/>
            <person name="Mizuno T."/>
            <person name="Morinaga M."/>
            <person name="Sasaki M."/>
            <person name="Togashi T."/>
            <person name="Oyama M."/>
            <person name="Hata H."/>
            <person name="Watanabe M."/>
            <person name="Komatsu T."/>
            <person name="Mizushima-Sugano J."/>
            <person name="Satoh T."/>
            <person name="Shirai Y."/>
            <person name="Takahashi Y."/>
            <person name="Nakagawa K."/>
            <person name="Okumura K."/>
            <person name="Nagase T."/>
            <person name="Nomura N."/>
            <person name="Kikuchi H."/>
            <person name="Masuho Y."/>
            <person name="Yamashita R."/>
            <person name="Nakai K."/>
            <person name="Yada T."/>
            <person name="Nakamura Y."/>
            <person name="Ohara O."/>
            <person name="Isogai T."/>
            <person name="Sugano S."/>
        </authorList>
    </citation>
    <scope>NUCLEOTIDE SEQUENCE [LARGE SCALE MRNA] (ISOFORMS 1 AND 2)</scope>
    <source>
        <tissue>Lung</tissue>
        <tissue>Neuroblastoma</tissue>
    </source>
</reference>
<reference key="5">
    <citation type="journal article" date="2003" name="Nature">
        <title>The DNA sequence and analysis of human chromosome 6.</title>
        <authorList>
            <person name="Mungall A.J."/>
            <person name="Palmer S.A."/>
            <person name="Sims S.K."/>
            <person name="Edwards C.A."/>
            <person name="Ashurst J.L."/>
            <person name="Wilming L."/>
            <person name="Jones M.C."/>
            <person name="Horton R."/>
            <person name="Hunt S.E."/>
            <person name="Scott C.E."/>
            <person name="Gilbert J.G.R."/>
            <person name="Clamp M.E."/>
            <person name="Bethel G."/>
            <person name="Milne S."/>
            <person name="Ainscough R."/>
            <person name="Almeida J.P."/>
            <person name="Ambrose K.D."/>
            <person name="Andrews T.D."/>
            <person name="Ashwell R.I.S."/>
            <person name="Babbage A.K."/>
            <person name="Bagguley C.L."/>
            <person name="Bailey J."/>
            <person name="Banerjee R."/>
            <person name="Barker D.J."/>
            <person name="Barlow K.F."/>
            <person name="Bates K."/>
            <person name="Beare D.M."/>
            <person name="Beasley H."/>
            <person name="Beasley O."/>
            <person name="Bird C.P."/>
            <person name="Blakey S.E."/>
            <person name="Bray-Allen S."/>
            <person name="Brook J."/>
            <person name="Brown A.J."/>
            <person name="Brown J.Y."/>
            <person name="Burford D.C."/>
            <person name="Burrill W."/>
            <person name="Burton J."/>
            <person name="Carder C."/>
            <person name="Carter N.P."/>
            <person name="Chapman J.C."/>
            <person name="Clark S.Y."/>
            <person name="Clark G."/>
            <person name="Clee C.M."/>
            <person name="Clegg S."/>
            <person name="Cobley V."/>
            <person name="Collier R.E."/>
            <person name="Collins J.E."/>
            <person name="Colman L.K."/>
            <person name="Corby N.R."/>
            <person name="Coville G.J."/>
            <person name="Culley K.M."/>
            <person name="Dhami P."/>
            <person name="Davies J."/>
            <person name="Dunn M."/>
            <person name="Earthrowl M.E."/>
            <person name="Ellington A.E."/>
            <person name="Evans K.A."/>
            <person name="Faulkner L."/>
            <person name="Francis M.D."/>
            <person name="Frankish A."/>
            <person name="Frankland J."/>
            <person name="French L."/>
            <person name="Garner P."/>
            <person name="Garnett J."/>
            <person name="Ghori M.J."/>
            <person name="Gilby L.M."/>
            <person name="Gillson C.J."/>
            <person name="Glithero R.J."/>
            <person name="Grafham D.V."/>
            <person name="Grant M."/>
            <person name="Gribble S."/>
            <person name="Griffiths C."/>
            <person name="Griffiths M.N.D."/>
            <person name="Hall R."/>
            <person name="Halls K.S."/>
            <person name="Hammond S."/>
            <person name="Harley J.L."/>
            <person name="Hart E.A."/>
            <person name="Heath P.D."/>
            <person name="Heathcott R."/>
            <person name="Holmes S.J."/>
            <person name="Howden P.J."/>
            <person name="Howe K.L."/>
            <person name="Howell G.R."/>
            <person name="Huckle E."/>
            <person name="Humphray S.J."/>
            <person name="Humphries M.D."/>
            <person name="Hunt A.R."/>
            <person name="Johnson C.M."/>
            <person name="Joy A.A."/>
            <person name="Kay M."/>
            <person name="Keenan S.J."/>
            <person name="Kimberley A.M."/>
            <person name="King A."/>
            <person name="Laird G.K."/>
            <person name="Langford C."/>
            <person name="Lawlor S."/>
            <person name="Leongamornlert D.A."/>
            <person name="Leversha M."/>
            <person name="Lloyd C.R."/>
            <person name="Lloyd D.M."/>
            <person name="Loveland J.E."/>
            <person name="Lovell J."/>
            <person name="Martin S."/>
            <person name="Mashreghi-Mohammadi M."/>
            <person name="Maslen G.L."/>
            <person name="Matthews L."/>
            <person name="McCann O.T."/>
            <person name="McLaren S.J."/>
            <person name="McLay K."/>
            <person name="McMurray A."/>
            <person name="Moore M.J.F."/>
            <person name="Mullikin J.C."/>
            <person name="Niblett D."/>
            <person name="Nickerson T."/>
            <person name="Novik K.L."/>
            <person name="Oliver K."/>
            <person name="Overton-Larty E.K."/>
            <person name="Parker A."/>
            <person name="Patel R."/>
            <person name="Pearce A.V."/>
            <person name="Peck A.I."/>
            <person name="Phillimore B.J.C.T."/>
            <person name="Phillips S."/>
            <person name="Plumb R.W."/>
            <person name="Porter K.M."/>
            <person name="Ramsey Y."/>
            <person name="Ranby S.A."/>
            <person name="Rice C.M."/>
            <person name="Ross M.T."/>
            <person name="Searle S.M."/>
            <person name="Sehra H.K."/>
            <person name="Sheridan E."/>
            <person name="Skuce C.D."/>
            <person name="Smith S."/>
            <person name="Smith M."/>
            <person name="Spraggon L."/>
            <person name="Squares S.L."/>
            <person name="Steward C.A."/>
            <person name="Sycamore N."/>
            <person name="Tamlyn-Hall G."/>
            <person name="Tester J."/>
            <person name="Theaker A.J."/>
            <person name="Thomas D.W."/>
            <person name="Thorpe A."/>
            <person name="Tracey A."/>
            <person name="Tromans A."/>
            <person name="Tubby B."/>
            <person name="Wall M."/>
            <person name="Wallis J.M."/>
            <person name="West A.P."/>
            <person name="White S.S."/>
            <person name="Whitehead S.L."/>
            <person name="Whittaker H."/>
            <person name="Wild A."/>
            <person name="Willey D.J."/>
            <person name="Wilmer T.E."/>
            <person name="Wood J.M."/>
            <person name="Wray P.W."/>
            <person name="Wyatt J.C."/>
            <person name="Young L."/>
            <person name="Younger R.M."/>
            <person name="Bentley D.R."/>
            <person name="Coulson A."/>
            <person name="Durbin R.M."/>
            <person name="Hubbard T."/>
            <person name="Sulston J.E."/>
            <person name="Dunham I."/>
            <person name="Rogers J."/>
            <person name="Beck S."/>
        </authorList>
    </citation>
    <scope>NUCLEOTIDE SEQUENCE [LARGE SCALE GENOMIC DNA]</scope>
</reference>
<reference key="6">
    <citation type="journal article" date="2004" name="Genome Res.">
        <title>The status, quality, and expansion of the NIH full-length cDNA project: the Mammalian Gene Collection (MGC).</title>
        <authorList>
            <consortium name="The MGC Project Team"/>
        </authorList>
    </citation>
    <scope>NUCLEOTIDE SEQUENCE [LARGE SCALE MRNA] (ISOFORM 1)</scope>
    <source>
        <tissue>Muscle</tissue>
    </source>
</reference>
<reference key="7">
    <citation type="submission" date="1998-04" db="EMBL/GenBank/DDBJ databases">
        <authorList>
            <person name="Mao Y.M."/>
            <person name="Xie Y."/>
            <person name="Ying K."/>
        </authorList>
    </citation>
    <scope>NUCLEOTIDE SEQUENCE [LARGE SCALE MRNA] OF 109-351 (ISOFORM 1)</scope>
    <source>
        <tissue>Fetal brain</tissue>
    </source>
</reference>
<reference key="8">
    <citation type="journal article" date="2004" name="Hum. Mol. Genet.">
        <title>Evidence of novel neuronal functions of dysbindin, a susceptibility gene for schizophrenia.</title>
        <authorList>
            <person name="Numakawa T."/>
            <person name="Yagasaki Y."/>
            <person name="Ishimoto T."/>
            <person name="Okada T."/>
            <person name="Suzuki T."/>
            <person name="Iwata N."/>
            <person name="Ozaki N."/>
            <person name="Taguchi T."/>
            <person name="Tatsumi M."/>
            <person name="Kamijima K."/>
            <person name="Straub R.E."/>
            <person name="Weinberger D.R."/>
            <person name="Kunugi H."/>
            <person name="Hashimoto R."/>
        </authorList>
    </citation>
    <scope>ASSOCIATION WITH SCHIZOPHRENIA</scope>
    <scope>FUNCTION</scope>
</reference>
<reference key="9">
    <citation type="journal article" date="2004" name="J. Clin. Invest.">
        <title>Dysbindin-1 is reduced in intrinsic, glutamatergic terminals of the hippocampal formation in schizophrenia.</title>
        <authorList>
            <person name="Talbot K."/>
            <person name="Eidem W.L."/>
            <person name="Tinsley C.L."/>
            <person name="Benson M.A."/>
            <person name="Thompson E.W."/>
            <person name="Smith R.J."/>
            <person name="Hahn C.G."/>
            <person name="Siegel S.J."/>
            <person name="Trojanowski J.Q."/>
            <person name="Gur R.E."/>
            <person name="Blake D.J."/>
            <person name="Arnold S.E."/>
        </authorList>
    </citation>
    <scope>ASSOCIATION WITH SCHIZOPHRENIA</scope>
    <scope>TISSUE SPECIFICITY (ISOFORMS 1 AND 2)</scope>
    <scope>SUBCELLULAR LOCATION</scope>
</reference>
<reference key="10">
    <citation type="journal article" date="2006" name="Hum. Mol. Genet.">
        <title>Dysbindin-1 is a synaptic and microtubular protein that binds brain snapin.</title>
        <authorList>
            <person name="Talbot K."/>
            <person name="Cho D.S."/>
            <person name="Ong W.Y."/>
            <person name="Benson M.A."/>
            <person name="Han L.Y."/>
            <person name="Kazi H.A."/>
            <person name="Kamins J."/>
            <person name="Hahn C.G."/>
            <person name="Blake D.J."/>
            <person name="Arnold S.E."/>
        </authorList>
    </citation>
    <scope>TISSUE SPECIFICITY</scope>
    <scope>SUBCELLULAR LOCATION</scope>
</reference>
<reference key="11">
    <citation type="journal article" date="2006" name="Mol. Biol. Cell">
        <title>BLOC-1 interacts with BLOC-2 and the AP-3 complex to facilitate protein trafficking on endosomes.</title>
        <authorList>
            <person name="Di Pietro S.M."/>
            <person name="Falcon-Perez J.M."/>
            <person name="Tenza D."/>
            <person name="Setty S.R."/>
            <person name="Marks M.S."/>
            <person name="Raposo G."/>
            <person name="Dell'Angelica E.C."/>
        </authorList>
    </citation>
    <scope>FUNCTION</scope>
    <scope>SUBUNIT</scope>
    <scope>SUBCELLULAR LOCATION</scope>
</reference>
<reference key="12">
    <citation type="journal article" date="2007" name="Mol. Biol. Cell">
        <title>BLOC-1 is required for cargo-specific sorting from vacuolar early endosomes toward lysosome-related organelles.</title>
        <authorList>
            <person name="Setty S.R."/>
            <person name="Tenza D."/>
            <person name="Truschel S.T."/>
            <person name="Chou E."/>
            <person name="Sviderskaya E.V."/>
            <person name="Theos A.C."/>
            <person name="Lamoreux M.L."/>
            <person name="Di Pietro S.M."/>
            <person name="Starcevic M."/>
            <person name="Bennett D.C."/>
            <person name="Dell'Angelica E.C."/>
            <person name="Raposo G."/>
            <person name="Marks M.S."/>
        </authorList>
    </citation>
    <scope>IDENTIFICATION IN THE BLOC-1 COMPLEX</scope>
    <scope>FUNCTION</scope>
</reference>
<reference key="13">
    <citation type="journal article" date="2007" name="J. Neurosci.">
        <title>Evidence that the BLOC-1 protein dysbindin modulates dopamine D2 receptor internalization and signaling but not D1 internalization.</title>
        <authorList>
            <person name="Iizuka Y."/>
            <person name="Sei Y."/>
            <person name="Weinberger D.R."/>
            <person name="Straub R.E."/>
        </authorList>
    </citation>
    <scope>FUNCTION</scope>
</reference>
<reference key="14">
    <citation type="journal article" date="2008" name="Proc. Natl. Acad. Sci. U.S.A.">
        <title>A quantitative atlas of mitotic phosphorylation.</title>
        <authorList>
            <person name="Dephoure N."/>
            <person name="Zhou C."/>
            <person name="Villen J."/>
            <person name="Beausoleil S.A."/>
            <person name="Bakalarski C.E."/>
            <person name="Elledge S.J."/>
            <person name="Gygi S.P."/>
        </authorList>
    </citation>
    <scope>PHOSPHORYLATION [LARGE SCALE ANALYSIS] AT SER-316 AND SER-321</scope>
    <scope>IDENTIFICATION BY MASS SPECTROMETRY [LARGE SCALE ANALYSIS]</scope>
    <source>
        <tissue>Cervix carcinoma</tissue>
    </source>
</reference>
<reference key="15">
    <citation type="journal article" date="2009" name="Hum. Mol. Genet.">
        <title>Dysbindin-1 in dorsolateral prefrontal cortex of schizophrenia cases is reduced in an isoform-specific manner unrelated to dysbindin-1 mRNA expression.</title>
        <authorList>
            <person name="Tang J."/>
            <person name="LeGros R.P."/>
            <person name="Louneva N."/>
            <person name="Yeh L."/>
            <person name="Cohen J.W."/>
            <person name="Hahn C.G."/>
            <person name="Blake D.J."/>
            <person name="Arnold S.E."/>
            <person name="Talbot K."/>
        </authorList>
    </citation>
    <scope>ASSOCIATION WITH SCHIZOPHRENIA</scope>
</reference>
<reference key="16">
    <citation type="journal article" date="2009" name="Sci. Signal.">
        <title>Quantitative phosphoproteomic analysis of T cell receptor signaling reveals system-wide modulation of protein-protein interactions.</title>
        <authorList>
            <person name="Mayya V."/>
            <person name="Lundgren D.H."/>
            <person name="Hwang S.-I."/>
            <person name="Rezaul K."/>
            <person name="Wu L."/>
            <person name="Eng J.K."/>
            <person name="Rodionov V."/>
            <person name="Han D.K."/>
        </authorList>
    </citation>
    <scope>PHOSPHORYLATION [LARGE SCALE ANALYSIS] AT SER-316 AND SER-321</scope>
    <scope>IDENTIFICATION BY MASS SPECTROMETRY [LARGE SCALE ANALYSIS]</scope>
    <source>
        <tissue>Leukemic T-cell</tissue>
    </source>
</reference>
<reference key="17">
    <citation type="book" date="2009" name="Handbook of neurochemistry and molecular neurobiology (3rd ed.)">
        <title>Dysbindin-1 and its protein family with special attention to the potential role of dysbindin-1 in neuronal functions and the pathophysiology of schizophrenia.</title>
        <editorList>
            <person name="Javitt D.C."/>
            <person name="Kantrowitz J."/>
        </editorList>
        <authorList>
            <person name="Talbot K."/>
            <person name="Ong W.-Y."/>
            <person name="Blake D.J."/>
            <person name="Tang J."/>
            <person name="Louneva N."/>
            <person name="Carlson G.C."/>
            <person name="Arnold S.E."/>
        </authorList>
    </citation>
    <scope>REVIEW</scope>
</reference>
<reference key="18">
    <citation type="journal article" date="2009" name="Biochem. Biophys. Res. Commun.">
        <title>Dysbindin engages in c-Jun N-terminal kinase activity and cytoskeletal organization.</title>
        <authorList>
            <person name="Kubota K."/>
            <person name="Kumamoto N."/>
            <person name="Matsuzaki S."/>
            <person name="Hashimoto R."/>
            <person name="Hattori T."/>
            <person name="Okuda H."/>
            <person name="Takamura H."/>
            <person name="Takeda M."/>
            <person name="Katayama T."/>
            <person name="Tohyama M."/>
        </authorList>
    </citation>
    <scope>FUNCTION</scope>
</reference>
<reference key="19">
    <citation type="journal article" date="2009" name="Hum. Mol. Genet.">
        <title>TRIM32 is an E3 ubiquitin ligase for dysbindin.</title>
        <authorList>
            <person name="Locke M."/>
            <person name="Tinsley C.L."/>
            <person name="Benson M.A."/>
            <person name="Blake D.J."/>
        </authorList>
    </citation>
    <scope>INTERACTION WITH TRIM32</scope>
    <scope>SUBCELLULAR LOCATION</scope>
    <scope>UBIQUITINATION</scope>
</reference>
<reference key="20">
    <citation type="journal article" date="2009" name="Neurochem. Int.">
        <title>Direct interaction of dysbindin with the AP-3 complex via its mu subunit.</title>
        <authorList>
            <person name="Taneichi-Kuroda S."/>
            <person name="Taya S."/>
            <person name="Hikita T."/>
            <person name="Fujino Y."/>
            <person name="Kaibuchi K."/>
        </authorList>
    </citation>
    <scope>INTERACTION WITH AP3M1</scope>
    <scope>MUTAGENESIS OF TYR-215</scope>
</reference>
<reference key="21">
    <citation type="journal article" date="2009" name="PLoS ONE">
        <title>Dysbindin-1, a schizophrenia-related protein, functionally interacts with the DNA-dependent protein kinase complex in an isoform-dependent manner.</title>
        <authorList>
            <person name="Oyama S."/>
            <person name="Yamakawa H."/>
            <person name="Sasagawa N."/>
            <person name="Hosoi Y."/>
            <person name="Futai E."/>
            <person name="Ishiura S."/>
        </authorList>
    </citation>
    <scope>SUBCELLULAR LOCATION</scope>
    <scope>ALTERNATIVE SPLICING (ISOFORMS 1; 2 AND 3)</scope>
    <scope>INTERACTION WITH AP3B2; XRCC5 AND XRCC6 IN THE DNA-DEPENDENT PROTEIN KINASE COMPLEX DNA-PK</scope>
    <scope>PHOSPHORYLATION</scope>
</reference>
<reference key="22">
    <citation type="journal article" date="2010" name="Genes Brain Behav.">
        <title>DTNBP1 (dysbindin) gene variants modulate prefrontal brain function in schizophrenic patients--support for the glutamate hypothesis of schizophrenias.</title>
        <authorList>
            <person name="Fallgatter A.J."/>
            <person name="Ehlis A.C."/>
            <person name="Herrmann M.J."/>
            <person name="Hohoff C."/>
            <person name="Reif A."/>
            <person name="Freitag C.M."/>
            <person name="Deckert J."/>
        </authorList>
    </citation>
    <scope>ASSOCIATION WITH SCHIZOPHRENIA</scope>
    <scope>FUNCTION</scope>
</reference>
<reference key="23">
    <citation type="journal article" date="2010" name="J. Biol. Chem.">
        <title>Nucleocytoplasmic shuttling of dysbindin-1, a schizophrenia-related protein, regulates synapsin I expression.</title>
        <authorList>
            <person name="Fei E."/>
            <person name="Ma X."/>
            <person name="Zhu C."/>
            <person name="Xue T."/>
            <person name="Yan J."/>
            <person name="Xu Y."/>
            <person name="Zhou J."/>
            <person name="Wang G."/>
        </authorList>
    </citation>
    <scope>SUBCELLULAR LOCATION</scope>
    <scope>FUNCTION</scope>
    <scope>INTERACTION WITH XPO1</scope>
    <scope>MUTAGENESIS OF 243-LEU--LEU-256</scope>
</reference>
<reference key="24">
    <citation type="journal article" date="2011" name="BMC Syst. Biol.">
        <title>Initial characterization of the human central proteome.</title>
        <authorList>
            <person name="Burkard T.R."/>
            <person name="Planyavsky M."/>
            <person name="Kaupe I."/>
            <person name="Breitwieser F.P."/>
            <person name="Buerckstuemmer T."/>
            <person name="Bennett K.L."/>
            <person name="Superti-Furga G."/>
            <person name="Colinge J."/>
        </authorList>
    </citation>
    <scope>IDENTIFICATION BY MASS SPECTROMETRY [LARGE SCALE ANALYSIS]</scope>
</reference>
<reference key="25">
    <citation type="journal article" date="2011" name="PLoS ONE">
        <title>Synaptic dysbindin-1 reductions in schizophrenia occur in an isoform-specific manner indicating their subsynaptic location.</title>
        <authorList>
            <person name="Talbot K."/>
            <person name="Louneva N."/>
            <person name="Cohen J.W."/>
            <person name="Kazi H."/>
            <person name="Blake D.J."/>
            <person name="Arnold S.E."/>
        </authorList>
    </citation>
    <scope>ASSOCIATION WITH SCHIZOPHRENIA</scope>
    <scope>TISSUE SPECIFICITY (ISOFORMS 1; 2 AND 3)</scope>
    <scope>SUBCELLULAR LOCATION (ISOFORMS 1; 2 AND 3)</scope>
</reference>
<reference key="26">
    <citation type="journal article" date="2012" name="J. Biol. Chem.">
        <title>Assembly and architecture of biogenesis of lysosome-related organelles complex-1 (BLOC-1).</title>
        <authorList>
            <person name="Lee H.H."/>
            <person name="Nemecek D."/>
            <person name="Schindler C."/>
            <person name="Smith W.J."/>
            <person name="Ghirlando R."/>
            <person name="Steven A.C."/>
            <person name="Bonifacino J.S."/>
            <person name="Hurley J.H."/>
        </authorList>
    </citation>
    <scope>IDENTIFICATION IN THE BLOC-1 COMPLEX</scope>
    <scope>COMPOSITION OF THE BLOC-1 COMPLEX</scope>
</reference>
<reference key="27">
    <citation type="journal article" date="2013" name="J. Proteome Res.">
        <title>Toward a comprehensive characterization of a human cancer cell phosphoproteome.</title>
        <authorList>
            <person name="Zhou H."/>
            <person name="Di Palma S."/>
            <person name="Preisinger C."/>
            <person name="Peng M."/>
            <person name="Polat A.N."/>
            <person name="Heck A.J."/>
            <person name="Mohammed S."/>
        </authorList>
    </citation>
    <scope>PHOSPHORYLATION [LARGE SCALE ANALYSIS] AT SER-11</scope>
    <scope>IDENTIFICATION BY MASS SPECTROMETRY [LARGE SCALE ANALYSIS]</scope>
    <source>
        <tissue>Cervix carcinoma</tissue>
        <tissue>Erythroleukemia</tissue>
    </source>
</reference>
<reference key="28">
    <citation type="journal article" date="2014" name="J. Proteomics">
        <title>An enzyme assisted RP-RPLC approach for in-depth analysis of human liver phosphoproteome.</title>
        <authorList>
            <person name="Bian Y."/>
            <person name="Song C."/>
            <person name="Cheng K."/>
            <person name="Dong M."/>
            <person name="Wang F."/>
            <person name="Huang J."/>
            <person name="Sun D."/>
            <person name="Wang L."/>
            <person name="Ye M."/>
            <person name="Zou H."/>
        </authorList>
    </citation>
    <scope>PHOSPHORYLATION [LARGE SCALE ANALYSIS] AT SER-316 AND SER-321</scope>
    <scope>IDENTIFICATION BY MASS SPECTROMETRY [LARGE SCALE ANALYSIS]</scope>
    <source>
        <tissue>Liver</tissue>
    </source>
</reference>
<accession>Q96EV8</accession>
<accession>A8K3V3</accession>
<accession>Q5THY3</accession>
<accession>Q5THY4</accession>
<accession>Q96NV2</accession>
<accession>Q9H0U2</accession>
<accession>Q9H3J5</accession>
<keyword id="KW-0015">Albinism</keyword>
<keyword id="KW-0024">Alternative initiation</keyword>
<keyword id="KW-0025">Alternative splicing</keyword>
<keyword id="KW-1003">Cell membrane</keyword>
<keyword id="KW-0175">Coiled coil</keyword>
<keyword id="KW-0963">Cytoplasm</keyword>
<keyword id="KW-0968">Cytoplasmic vesicle</keyword>
<keyword id="KW-0256">Endoplasmic reticulum</keyword>
<keyword id="KW-0967">Endosome</keyword>
<keyword id="KW-0363">Hermansky-Pudlak syndrome</keyword>
<keyword id="KW-0472">Membrane</keyword>
<keyword id="KW-0539">Nucleus</keyword>
<keyword id="KW-0597">Phosphoprotein</keyword>
<keyword id="KW-0628">Postsynaptic cell membrane</keyword>
<keyword id="KW-1267">Proteomics identification</keyword>
<keyword id="KW-1185">Reference proteome</keyword>
<keyword id="KW-1211">Schizophrenia</keyword>
<keyword id="KW-0716">Sensory transduction</keyword>
<keyword id="KW-0770">Synapse</keyword>
<keyword id="KW-0832">Ubl conjugation</keyword>
<gene>
    <name type="primary">DTNBP1</name>
    <name type="synonym">BLOC1S8</name>
    <name type="ORF">My031</name>
</gene>
<evidence type="ECO:0000250" key="1"/>
<evidence type="ECO:0000250" key="2">
    <source>
        <dbReference type="UniProtKB" id="Q91WZ8"/>
    </source>
</evidence>
<evidence type="ECO:0000255" key="3"/>
<evidence type="ECO:0000256" key="4">
    <source>
        <dbReference type="SAM" id="MobiDB-lite"/>
    </source>
</evidence>
<evidence type="ECO:0000269" key="5">
    <source>
    </source>
</evidence>
<evidence type="ECO:0000269" key="6">
    <source>
    </source>
</evidence>
<evidence type="ECO:0000269" key="7">
    <source>
    </source>
</evidence>
<evidence type="ECO:0000269" key="8">
    <source>
    </source>
</evidence>
<evidence type="ECO:0000269" key="9">
    <source>
    </source>
</evidence>
<evidence type="ECO:0000269" key="10">
    <source>
    </source>
</evidence>
<evidence type="ECO:0000269" key="11">
    <source>
    </source>
</evidence>
<evidence type="ECO:0000269" key="12">
    <source>
    </source>
</evidence>
<evidence type="ECO:0000269" key="13">
    <source>
    </source>
</evidence>
<evidence type="ECO:0000269" key="14">
    <source>
    </source>
</evidence>
<evidence type="ECO:0000269" key="15">
    <source>
    </source>
</evidence>
<evidence type="ECO:0000269" key="16">
    <source>
    </source>
</evidence>
<evidence type="ECO:0000269" key="17">
    <source>
    </source>
</evidence>
<evidence type="ECO:0000269" key="18">
    <source>
    </source>
</evidence>
<evidence type="ECO:0000269" key="19">
    <source>
    </source>
</evidence>
<evidence type="ECO:0000269" key="20">
    <source>
    </source>
</evidence>
<evidence type="ECO:0000303" key="21">
    <source>
    </source>
</evidence>
<evidence type="ECO:0000303" key="22">
    <source>
    </source>
</evidence>
<evidence type="ECO:0000305" key="23"/>
<evidence type="ECO:0007744" key="24">
    <source>
    </source>
</evidence>
<evidence type="ECO:0007744" key="25">
    <source>
    </source>
</evidence>
<evidence type="ECO:0007744" key="26">
    <source>
    </source>
</evidence>
<evidence type="ECO:0007744" key="27">
    <source>
    </source>
</evidence>
<name>DTBP1_HUMAN</name>
<feature type="chain" id="PRO_0000191001" description="Dysbindin">
    <location>
        <begin position="1"/>
        <end position="351"/>
    </location>
</feature>
<feature type="region of interest" description="Dysbindin">
    <location>
        <begin position="173"/>
        <end position="331"/>
    </location>
</feature>
<feature type="region of interest" description="Disordered" evidence="4">
    <location>
        <begin position="286"/>
        <end position="351"/>
    </location>
</feature>
<feature type="coiled-coil region" evidence="3">
    <location>
        <begin position="88"/>
        <end position="181"/>
    </location>
</feature>
<feature type="short sequence motif" description="Nuclear export signal">
    <location>
        <begin position="243"/>
        <end position="256"/>
    </location>
</feature>
<feature type="compositionally biased region" description="Polar residues" evidence="4">
    <location>
        <begin position="296"/>
        <end position="305"/>
    </location>
</feature>
<feature type="modified residue" description="Phosphoserine" evidence="26">
    <location>
        <position position="11"/>
    </location>
</feature>
<feature type="modified residue" description="Phosphoserine" evidence="24 25 27">
    <location>
        <position position="316"/>
    </location>
</feature>
<feature type="modified residue" description="Phosphoserine" evidence="24 25 27">
    <location>
        <position position="321"/>
    </location>
</feature>
<feature type="modified residue" description="Phosphoserine" evidence="2">
    <location>
        <position position="349"/>
    </location>
</feature>
<feature type="splice variant" id="VSP_046062" description="In isoform 3." evidence="23">
    <location>
        <begin position="1"/>
        <end position="81"/>
    </location>
</feature>
<feature type="splice variant" id="VSP_009023" description="In isoform 2." evidence="21 22">
    <original>PESSTCQNEITLQVPNPSELRAKPPSSSSTCTDSATRDISEGGESPVVQSDEEEVQVDTALATSHTDREATPDGGEDSDS</original>
    <variation>RVDKLALAEPGQYRCHSPPKVRRENHLPVTYA</variation>
    <location>
        <begin position="272"/>
        <end position="351"/>
    </location>
</feature>
<feature type="sequence variant" id="VAR_053069" description="In dbSNP:rs16876589.">
    <original>G</original>
    <variation>D</variation>
    <location>
        <position position="214"/>
    </location>
</feature>
<feature type="sequence variant" id="VAR_029644" description="In dbSNP:rs17470454.">
    <original>P</original>
    <variation>S</variation>
    <location>
        <position position="272"/>
    </location>
</feature>
<feature type="mutagenesis site" description="Reduced interaction with AP3M1." evidence="15">
    <original>Y</original>
    <variation>A</variation>
    <location>
        <position position="215"/>
    </location>
</feature>
<feature type="mutagenesis site" description="Abolishes cytoplasmic location. Increased expression of SYN1." evidence="18">
    <original>LMDISDQEALDVFL</original>
    <variation>AMDASDQEAADVFA</variation>
    <location>
        <begin position="243"/>
        <end position="256"/>
    </location>
</feature>
<feature type="sequence conflict" description="In Ref. 3; CAB66572." evidence="23" ref="3">
    <original>D</original>
    <variation>V</variation>
    <location>
        <position position="242"/>
    </location>
</feature>
<comment type="function">
    <text evidence="7 8 10 11 12 17 18">Component of the BLOC-1 complex, a complex that is required for normal biogenesis of lysosome-related organelles (LRO), such as platelet dense granules and melanosomes. In concert with the AP-3 complex, the BLOC-1 complex is required to target membrane protein cargos into vesicles assembled at cell bodies for delivery into neurites and nerve terminals. The BLOC-1 complex, in association with SNARE proteins, is also proposed to be involved in neurite extension. Associates with the BLOC-2 complex to facilitate the transport of TYRP1 independent of AP-3 function. Plays a role in synaptic vesicle trafficking and in neurotransmitter release. Plays a role in the regulation of cell surface exposure of DRD2. May play a role in actin cytoskeleton reorganization and neurite outgrowth. May modulate MAPK8 phosphorylation. Appears to promote neuronal transmission and viability through regulating the expression of SNAP25 and SYN1, modulating PI3-kinase-Akt signaling and influencing glutamatergic release. Regulates the expression of SYN1 through binding to its promoter. Modulates prefrontal cortical activity via the dopamine/D2 pathway.</text>
</comment>
<comment type="subunit">
    <text evidence="1 8 9 10 13 14 15 18 20">Interacts (via its coiled coil domain) with KXD1. Interacts with CMYA5, PI4K2 and RNF151 (By similarity). Component of the biogenesis of lysosome-related organelles complex 1 (BLOC-1) composed of at least BLOC1S1, BLOC1S2, BLOC1S3, BLOC1S4, BLOC1S5, BLOC1S6, DTNBP1/BLOC1S7 and SNAPIN/BLOC1S8. Interacts directly in the complex with BLOC1S5, BLOC1S6 and SNAPIN/BLOC1S8. The BLOC-1 complex associates with the AP-3 protein complex and membrane protein cargos. This BLOC-1 complex also associates with the BLOC-2 complex in endosomes. Binds to DTNA and DTNB but may not be a physiological binding partner (PubMed:16980328). Interacts (isoform 1 and isoform 2 only) with the DNA-dependent protein kinase complex DNA-PK; the interaction phosphorylates DTNBP1 in vitro. Interacts directly in this complex with XRCC5 and XRCC6. Interacts with AP3M1, AP3B2 and TRIM32. Interacts with XPO1; the interaction exports DTNBP1 out of the nucleus.</text>
</comment>
<comment type="interaction">
    <interactant intactId="EBI-465804">
        <id>Q96EV8</id>
    </interactant>
    <interactant intactId="EBI-465861">
        <id>Q8TDH9</id>
        <label>BLOC1S5</label>
    </interactant>
    <organismsDiffer>false</organismsDiffer>
    <experiments>5</experiments>
</comment>
<comment type="interaction">
    <interactant intactId="EBI-465804">
        <id>Q96EV8</id>
    </interactant>
    <interactant intactId="EBI-465781">
        <id>Q9UL45</id>
        <label>BLOC1S6</label>
    </interactant>
    <organismsDiffer>false</organismsDiffer>
    <experiments>12</experiments>
</comment>
<comment type="interaction">
    <interactant intactId="EBI-465804">
        <id>Q96EV8</id>
    </interactant>
    <interactant intactId="EBI-2837444">
        <id>Q8WUW1</id>
        <label>BRK1</label>
    </interactant>
    <organismsDiffer>false</organismsDiffer>
    <experiments>4</experiments>
</comment>
<comment type="interaction">
    <interactant intactId="EBI-465804">
        <id>Q96EV8</id>
    </interactant>
    <interactant intactId="EBI-10247802">
        <id>Q8IYE0-2</id>
        <label>CCDC146</label>
    </interactant>
    <organismsDiffer>false</organismsDiffer>
    <experiments>3</experiments>
</comment>
<comment type="interaction">
    <interactant intactId="EBI-465804">
        <id>Q96EV8</id>
    </interactant>
    <interactant intactId="EBI-10175300">
        <id>Q8TD31-3</id>
        <label>CCHCR1</label>
    </interactant>
    <organismsDiffer>false</organismsDiffer>
    <experiments>3</experiments>
</comment>
<comment type="interaction">
    <interactant intactId="EBI-465804">
        <id>Q96EV8</id>
    </interactant>
    <interactant intactId="EBI-10241443">
        <id>Q494R4</id>
        <label>DRC12</label>
    </interactant>
    <organismsDiffer>false</organismsDiffer>
    <experiments>3</experiments>
</comment>
<comment type="interaction">
    <interactant intactId="EBI-465804">
        <id>Q96EV8</id>
    </interactant>
    <interactant intactId="EBI-740402">
        <id>O60941</id>
        <label>DTNB</label>
    </interactant>
    <organismsDiffer>false</organismsDiffer>
    <experiments>3</experiments>
</comment>
<comment type="interaction">
    <interactant intactId="EBI-465804">
        <id>Q96EV8</id>
    </interactant>
    <interactant intactId="EBI-10285373">
        <id>A1L3X0</id>
        <label>ELOVL7</label>
    </interactant>
    <organismsDiffer>false</organismsDiffer>
    <experiments>3</experiments>
</comment>
<comment type="interaction">
    <interactant intactId="EBI-465804">
        <id>Q96EV8</id>
    </interactant>
    <interactant intactId="EBI-2514791">
        <id>Q96CS2</id>
        <label>HAUS1</label>
    </interactant>
    <organismsDiffer>false</organismsDiffer>
    <experiments>3</experiments>
</comment>
<comment type="interaction">
    <interactant intactId="EBI-465804">
        <id>Q96EV8</id>
    </interactant>
    <interactant intactId="EBI-744203">
        <id>Q8IY31</id>
        <label>IFT20</label>
    </interactant>
    <organismsDiffer>false</organismsDiffer>
    <experiments>3</experiments>
</comment>
<comment type="interaction">
    <interactant intactId="EBI-465804">
        <id>Q96EV8</id>
    </interactant>
    <interactant intactId="EBI-740244">
        <id>Q7Z3B3</id>
        <label>KANSL1</label>
    </interactant>
    <organismsDiffer>false</organismsDiffer>
    <experiments>3</experiments>
</comment>
<comment type="interaction">
    <interactant intactId="EBI-465804">
        <id>Q96EV8</id>
    </interactant>
    <interactant intactId="EBI-2125614">
        <id>Q9BVG8</id>
        <label>KIFC3</label>
    </interactant>
    <organismsDiffer>false</organismsDiffer>
    <experiments>3</experiments>
</comment>
<comment type="interaction">
    <interactant intactId="EBI-465804">
        <id>Q96EV8</id>
    </interactant>
    <interactant intactId="EBI-2949715">
        <id>O95678</id>
        <label>KRT75</label>
    </interactant>
    <organismsDiffer>false</organismsDiffer>
    <experiments>3</experiments>
</comment>
<comment type="interaction">
    <interactant intactId="EBI-465804">
        <id>Q96EV8</id>
    </interactant>
    <interactant intactId="EBI-10172876">
        <id>Q7Z6G3-2</id>
        <label>NECAB2</label>
    </interactant>
    <organismsDiffer>false</organismsDiffer>
    <experiments>3</experiments>
</comment>
<comment type="interaction">
    <interactant intactId="EBI-465804">
        <id>Q96EV8</id>
    </interactant>
    <interactant intactId="EBI-536879">
        <id>O43482</id>
        <label>OIP5</label>
    </interactant>
    <organismsDiffer>false</organismsDiffer>
    <experiments>3</experiments>
</comment>
<comment type="interaction">
    <interactant intactId="EBI-465804">
        <id>Q96EV8</id>
    </interactant>
    <interactant intactId="EBI-10181968">
        <id>Q7Z4N8</id>
        <label>P4HA3</label>
    </interactant>
    <organismsDiffer>false</organismsDiffer>
    <experiments>3</experiments>
</comment>
<comment type="interaction">
    <interactant intactId="EBI-465804">
        <id>Q96EV8</id>
    </interactant>
    <interactant intactId="EBI-727004">
        <id>O00560</id>
        <label>SDCBP</label>
    </interactant>
    <organismsDiffer>false</organismsDiffer>
    <experiments>3</experiments>
</comment>
<comment type="interaction">
    <interactant intactId="EBI-465804">
        <id>Q96EV8</id>
    </interactant>
    <interactant intactId="EBI-10313866">
        <id>Q9NUL5</id>
        <label>SHFL</label>
    </interactant>
    <organismsDiffer>false</organismsDiffer>
    <experiments>3</experiments>
</comment>
<comment type="interaction">
    <interactant intactId="EBI-465804">
        <id>Q96EV8</id>
    </interactant>
    <interactant intactId="EBI-296723">
        <id>O95295</id>
        <label>SNAPIN</label>
    </interactant>
    <organismsDiffer>false</organismsDiffer>
    <experiments>9</experiments>
</comment>
<comment type="interaction">
    <interactant intactId="EBI-465804">
        <id>Q96EV8</id>
    </interactant>
    <interactant intactId="EBI-10172867">
        <id>A1L4H1</id>
        <label>SSC5D</label>
    </interactant>
    <organismsDiffer>false</organismsDiffer>
    <experiments>3</experiments>
</comment>
<comment type="interaction">
    <interactant intactId="EBI-465804">
        <id>Q96EV8</id>
    </interactant>
    <interactant intactId="EBI-948293">
        <id>Q9NX95</id>
        <label>SYBU</label>
    </interactant>
    <organismsDiffer>false</organismsDiffer>
    <experiments>3</experiments>
</comment>
<comment type="interaction">
    <interactant intactId="EBI-465804">
        <id>Q96EV8</id>
    </interactant>
    <interactant intactId="EBI-719493">
        <id>P14373</id>
        <label>TRIM27</label>
    </interactant>
    <organismsDiffer>false</organismsDiffer>
    <experiments>3</experiments>
</comment>
<comment type="interaction">
    <interactant intactId="EBI-465804">
        <id>Q96EV8</id>
    </interactant>
    <interactant intactId="EBI-6116822">
        <id>Q8N3L3</id>
        <label>TXLNB</label>
    </interactant>
    <organismsDiffer>false</organismsDiffer>
    <experiments>6</experiments>
</comment>
<comment type="interaction">
    <interactant intactId="EBI-465804">
        <id>Q96EV8</id>
    </interactant>
    <interactant intactId="EBI-712969">
        <id>Q9Y3C0</id>
        <label>WASHC3</label>
    </interactant>
    <organismsDiffer>false</organismsDiffer>
    <experiments>3</experiments>
</comment>
<comment type="interaction">
    <interactant intactId="EBI-16749108">
        <id>Q96EV8-1</id>
    </interactant>
    <interactant intactId="EBI-357997">
        <id>P13010</id>
        <label>XRCC5</label>
    </interactant>
    <organismsDiffer>false</organismsDiffer>
    <experiments>2</experiments>
</comment>
<comment type="subcellular location">
    <molecule>Isoform 1</molecule>
    <subcellularLocation>
        <location evidence="19">Cytoplasm</location>
    </subcellularLocation>
    <subcellularLocation>
        <location evidence="19">Cytoplasmic vesicle membrane</location>
        <topology evidence="19">Peripheral membrane protein</topology>
        <orientation evidence="19">Cytoplasmic side</orientation>
    </subcellularLocation>
    <subcellularLocation>
        <location evidence="19">Endosome membrane</location>
        <topology evidence="19">Peripheral membrane protein</topology>
        <orientation evidence="19">Cytoplasmic side</orientation>
    </subcellularLocation>
    <subcellularLocation>
        <location evidence="19">Melanosome membrane</location>
        <topology evidence="19">Peripheral membrane protein</topology>
        <orientation evidence="19">Cytoplasmic side</orientation>
    </subcellularLocation>
    <subcellularLocation>
        <location evidence="19">Postsynaptic density</location>
    </subcellularLocation>
    <subcellularLocation>
        <location evidence="1">Endoplasmic reticulum</location>
    </subcellularLocation>
    <subcellularLocation>
        <location evidence="19">Nucleus</location>
    </subcellularLocation>
    <text>Mainly cytoplasmic but shuttles between the cytoplasm and nucleus. Exported out of the nucleus via its NES in a XPO1-dependent manner. Nuclear localization is required for regulation of the expression of genes such as SYN1. Detected in neuron cell bodies, axons and dendrites. Mainly located to the postsynaptic density. Detected at tubulovesicular elements in the vicinity of the Golgi apparatus and of melanosomes. Occasionally detected at the membrane of pigmented melanosomes in cultured melanoma cells. The BLOC-1 complex associates with the BLOC-2 complex in early endosome-associated tubules.</text>
</comment>
<comment type="subcellular location">
    <molecule>Isoform 2</molecule>
    <subcellularLocation>
        <location evidence="19">Cytoplasm</location>
    </subcellularLocation>
    <subcellularLocation>
        <location evidence="19">Cytoplasmic vesicle membrane</location>
        <topology evidence="19">Peripheral membrane protein</topology>
        <orientation evidence="19">Cytoplasmic side</orientation>
    </subcellularLocation>
    <subcellularLocation>
        <location evidence="19">Cytoplasmic vesicle</location>
        <location evidence="19">Secretory vesicle</location>
        <location evidence="19">Synaptic vesicle membrane</location>
        <topology evidence="19">Peripheral membrane protein</topology>
        <orientation evidence="19">Cytoplasmic side</orientation>
    </subcellularLocation>
    <subcellularLocation>
        <location evidence="19">Endosome membrane</location>
        <topology evidence="19">Peripheral membrane protein</topology>
        <orientation evidence="19">Cytoplasmic side</orientation>
    </subcellularLocation>
    <subcellularLocation>
        <location evidence="1">Melanosome membrane</location>
        <topology evidence="1">Peripheral membrane protein</topology>
        <orientation evidence="1">Cytoplasmic side</orientation>
    </subcellularLocation>
    <subcellularLocation>
        <location evidence="19">Postsynaptic cell membrane</location>
    </subcellularLocation>
    <subcellularLocation>
        <location evidence="1">Endoplasmic reticulum</location>
    </subcellularLocation>
    <subcellularLocation>
        <location evidence="19">Nucleus</location>
    </subcellularLocation>
    <text>Shuttles between the cytoplasm and nucleus. Exported out of the nucleus via its NES in a XPO1-dependent manner. Nuclear localization is required for regulation of the expression of genes such as SYN1. Mainly expressed in the dendritic spine. Predominantly a synaptic vesicle isoform but also highly expressed in the nucleus. The BLOC-1 complex associates with the BLOC-2 complex in early endosome-associated tubules. Associated with the AP-3 complex at presynaptic terminals.</text>
</comment>
<comment type="subcellular location">
    <molecule>Isoform 3</molecule>
    <subcellularLocation>
        <location evidence="19">Cytoplasm</location>
    </subcellularLocation>
    <subcellularLocation>
        <location evidence="19">Cytoplasmic vesicle membrane</location>
        <topology evidence="19">Peripheral membrane protein</topology>
        <orientation evidence="19">Cytoplasmic side</orientation>
    </subcellularLocation>
    <subcellularLocation>
        <location evidence="19">Cytoplasmic vesicle</location>
        <location evidence="19">Secretory vesicle</location>
        <location evidence="19">Synaptic vesicle membrane</location>
        <topology evidence="19">Peripheral membrane protein</topology>
        <orientation evidence="19">Cytoplasmic side</orientation>
    </subcellularLocation>
    <subcellularLocation>
        <location evidence="19">Endosome membrane</location>
        <topology evidence="19">Peripheral membrane protein</topology>
        <orientation evidence="19">Cytoplasmic side</orientation>
    </subcellularLocation>
    <subcellularLocation>
        <location evidence="1">Melanosome membrane</location>
        <topology evidence="1">Peripheral membrane protein</topology>
        <orientation evidence="1">Cytoplasmic side</orientation>
    </subcellularLocation>
    <subcellularLocation>
        <location evidence="19">Postsynaptic cell membrane</location>
    </subcellularLocation>
    <subcellularLocation>
        <location evidence="1">Endoplasmic reticulum</location>
    </subcellularLocation>
    <text>Exclusivley cytoplasmic. Predominantly found in the postsynaptic density (PSD). Little association with synaptic vesicles. The BLOC-1 complex associates with the BLOC-2 complex in early endosome-associated tubules. Associated with the AP-3 complex at presynaptic terminals.</text>
</comment>
<comment type="alternative products">
    <event type="alternative splicing"/>
    <event type="alternative initiation"/>
    <isoform>
        <id>Q96EV8-1</id>
        <name>1</name>
        <name>Dysbindin 1-A</name>
        <sequence type="displayed"/>
    </isoform>
    <isoform>
        <id>Q96EV8-2</id>
        <name>2</name>
        <sequence type="described" ref="VSP_009023"/>
    </isoform>
    <isoform>
        <id>Q96EV8-3</id>
        <name>3</name>
        <name>Dysbindin 1-B</name>
        <sequence type="described" ref="VSP_046062"/>
    </isoform>
</comment>
<comment type="tissue specificity">
    <text evidence="9">Detected in brain, in neurons and in neuropil. Isoform 1 is expressed in the cerebral cortex, and hippocampal frontal (HF). Specific expression in the posterior half of the superior temporal gyrus (pSTG). Higher expression of isoform 2 and 3 in the HF than in the pSTG while isoform 1 shows no difference in expression in these areas. In the HF, detected in dentate gyrus (DG) and in pyramidal cells of hippocampus CA2 and CA3 (at protein level). Expressed in all principal neuronal populations of the HF, namely pyramidal neurons in the subiculum and CA1-3, granule cells in the dense cell layer of the DG (DGg), and polymorph cells in the hilus of the DG (DGh). Maximal levels in CA2, CA3, and DGh. Isoform 2 not expressed in the cerebral cortex.</text>
</comment>
<comment type="PTM">
    <text evidence="14">Ubiquitinated by TRIM32. Ubiquitination leads to DTNBP1 degradation.</text>
</comment>
<comment type="PTM">
    <text evidence="13">Isoforms 1 and 2 highly phosphorylated by PRKDC in vitro. Isoform 3 only weakly phosphorylated by PRKDC in vitro.</text>
</comment>
<comment type="disease" evidence="5">
    <disease id="DI-00563">
        <name>Hermansky-Pudlak syndrome 7</name>
        <acronym>HPS7</acronym>
        <description>A form of Hermansky-Pudlak syndrome, a genetically heterogeneous autosomal recessive disorder characterized by oculocutaneous albinism, bleeding due to platelet storage pool deficiency, and lysosomal storage defects. This syndrome results from defects of diverse cytoplasmic organelles including melanosomes, platelet dense granules and lysosomes. Ceroid storage in the lungs is associated with pulmonary fibrosis, a common cause of premature death in individuals with HPS.</description>
        <dbReference type="MIM" id="614076"/>
    </disease>
    <text>The disease is caused by variants affecting the gene represented in this entry.</text>
</comment>
<comment type="disease">
    <text evidence="6 7 16">Defects in DTNBP1 are associated with susceptibility to schizophrenia, a mental disorder characterized by a breakdown of thought processes and by poor emotional responsiveness. Genetic mutations lead to alterations in the glutamatergic transmission in the brain and modified Akt signaling (PubMed:15345706). Protein levels and expression are reduced in nerve terminals of the hippocampus and there is an increased release of glutamate in schizophrenic patients (PubMed:15124027). Levels of isoform 1 are reduced in the pSTG, but not in HF, by about 48% in 92% of schizophrenic patients. In the HF, there is an average of 33% reduction in synaptic expression of isoform 2 in 67% of cases, and of isoform 3, an average reduction of 35% in 80% of cases. In the dorsolateral prefrontal cortex (DLPFC), significant reductions in levels of isoform 3 are observed about 71% of schizophrenic patients showed an average reduction of this isoform of about 60% (PubMed:19617633).</text>
</comment>
<comment type="miscellaneous">
    <molecule>Isoform 1</molecule>
    <text>Major isoform.</text>
</comment>
<comment type="miscellaneous">
    <molecule>Isoform 2</molecule>
    <text evidence="23">May be due to intron retention.</text>
</comment>
<comment type="similarity">
    <text evidence="23">Belongs to the dysbindin family.</text>
</comment>
<comment type="sequence caution" evidence="23">
    <conflict type="erroneous initiation">
        <sequence resource="EMBL-CDS" id="AAG43145"/>
    </conflict>
    <text>Truncated N-terminus.</text>
</comment>
<organism>
    <name type="scientific">Homo sapiens</name>
    <name type="common">Human</name>
    <dbReference type="NCBI Taxonomy" id="9606"/>
    <lineage>
        <taxon>Eukaryota</taxon>
        <taxon>Metazoa</taxon>
        <taxon>Chordata</taxon>
        <taxon>Craniata</taxon>
        <taxon>Vertebrata</taxon>
        <taxon>Euteleostomi</taxon>
        <taxon>Mammalia</taxon>
        <taxon>Eutheria</taxon>
        <taxon>Euarchontoglires</taxon>
        <taxon>Primates</taxon>
        <taxon>Haplorrhini</taxon>
        <taxon>Catarrhini</taxon>
        <taxon>Hominidae</taxon>
        <taxon>Homo</taxon>
    </lineage>
</organism>
<sequence>MLETLRERLLSVQQDFTSGLKTLSDKSREAKVKSKPRTVPFLPKYSAGLELLSRYEDTWAALHRRAKDCASAGELVDSEVVMLSAHWEKKKTSLVELQEQLQQLPALIADLESMTANLTHLEASFEEVENNLLHLEDLCGQCELERCKHMQSQQLENYKKNKRKELETFKAELDAEHAQKVLEMEHTQQMKLKERQKFFEEAFQQDMEQYLSTGYLQIAERREPIGSMSSMEVNVDMLEQMDLMDISDQEALDVFLNSGGEENTVLSPALGPESSTCQNEITLQVPNPSELRAKPPSSSSTCTDSATRDISEGGESPVVQSDEEEVQVDTALATSHTDREATPDGGEDSDS</sequence>
<proteinExistence type="evidence at protein level"/>